<reference key="1">
    <citation type="submission" date="2010-08" db="EMBL/GenBank/DDBJ databases">
        <title>Genome comparisons of Edwardsiella bacteria analysed using deep sequencing technology.</title>
        <authorList>
            <person name="van Soest J.J."/>
            <person name="Henkel C.V."/>
            <person name="Jansen H.J."/>
            <person name="van den Hondel C.A.M.J.J."/>
            <person name="Bloemberg G.V."/>
            <person name="Meijer A.H."/>
            <person name="Spaink H.P."/>
        </authorList>
    </citation>
    <scope>NUCLEOTIDE SEQUENCE [LARGE SCALE GENOMIC DNA]</scope>
    <source>
        <strain>FL6-60</strain>
    </source>
</reference>
<evidence type="ECO:0000255" key="1">
    <source>
        <dbReference type="HAMAP-Rule" id="MF_00837"/>
    </source>
</evidence>
<feature type="signal peptide" evidence="1">
    <location>
        <begin position="1"/>
        <end position="24"/>
    </location>
</feature>
<feature type="chain" id="PRO_0000414437" description="Lipid A acyltransferase PagP">
    <location>
        <begin position="25"/>
        <end position="185"/>
    </location>
</feature>
<feature type="active site" evidence="1">
    <location>
        <position position="57"/>
    </location>
</feature>
<feature type="active site" evidence="1">
    <location>
        <position position="100"/>
    </location>
</feature>
<feature type="active site" evidence="1">
    <location>
        <position position="101"/>
    </location>
</feature>
<feature type="site" description="Role in lipopolysaccharide recognition" evidence="1">
    <location>
        <position position="66"/>
    </location>
</feature>
<feature type="site" description="Role in the phospholipid gating" evidence="1">
    <location>
        <position position="171"/>
    </location>
</feature>
<sequence>MKTHNDILAALAALPLFLTGAAFAAEPGMLDTLRNNIVQTWEQPQHYDLYLPAITWHARFAYSQEKIDSYNERPWGAGFGQSRWDEKGNWHGLYLMAFKDSFNKWEPIGGYGWEATWRPLEGSDFHWGAGYTVGVTMRDNWRYIPIPVILPMASVGYGPLTLQMTYIPGTYDNGNVYFAWLRLQF</sequence>
<keyword id="KW-0012">Acyltransferase</keyword>
<keyword id="KW-0998">Cell outer membrane</keyword>
<keyword id="KW-0472">Membrane</keyword>
<keyword id="KW-1185">Reference proteome</keyword>
<keyword id="KW-0732">Signal</keyword>
<keyword id="KW-0808">Transferase</keyword>
<proteinExistence type="inferred from homology"/>
<name>PAGP_EDWTF</name>
<organism>
    <name type="scientific">Edwardsiella tarda (strain FL6-60)</name>
    <dbReference type="NCBI Taxonomy" id="718251"/>
    <lineage>
        <taxon>Bacteria</taxon>
        <taxon>Pseudomonadati</taxon>
        <taxon>Pseudomonadota</taxon>
        <taxon>Gammaproteobacteria</taxon>
        <taxon>Enterobacterales</taxon>
        <taxon>Hafniaceae</taxon>
        <taxon>Edwardsiella</taxon>
    </lineage>
</organism>
<dbReference type="EC" id="2.3.1.251" evidence="1"/>
<dbReference type="EMBL" id="CP002154">
    <property type="protein sequence ID" value="ADM42525.1"/>
    <property type="molecule type" value="Genomic_DNA"/>
</dbReference>
<dbReference type="SMR" id="E0T5K2"/>
<dbReference type="KEGG" id="etd:ETAF_2422"/>
<dbReference type="PATRIC" id="fig|718251.5.peg.2515"/>
<dbReference type="HOGENOM" id="CLU_104099_0_0_6"/>
<dbReference type="Proteomes" id="UP000002230">
    <property type="component" value="Chromosome"/>
</dbReference>
<dbReference type="GO" id="GO:0009279">
    <property type="term" value="C:cell outer membrane"/>
    <property type="evidence" value="ECO:0007669"/>
    <property type="project" value="UniProtKB-SubCell"/>
</dbReference>
<dbReference type="GO" id="GO:0016746">
    <property type="term" value="F:acyltransferase activity"/>
    <property type="evidence" value="ECO:0007669"/>
    <property type="project" value="UniProtKB-UniRule"/>
</dbReference>
<dbReference type="GO" id="GO:0009245">
    <property type="term" value="P:lipid A biosynthetic process"/>
    <property type="evidence" value="ECO:0007669"/>
    <property type="project" value="UniProtKB-UniRule"/>
</dbReference>
<dbReference type="FunFam" id="2.40.160.20:FF:000002">
    <property type="entry name" value="Lipid A palmitoyltransferase PagP"/>
    <property type="match status" value="1"/>
</dbReference>
<dbReference type="Gene3D" id="2.40.160.20">
    <property type="match status" value="1"/>
</dbReference>
<dbReference type="HAMAP" id="MF_00837">
    <property type="entry name" value="PagP_transferase"/>
    <property type="match status" value="1"/>
</dbReference>
<dbReference type="InterPro" id="IPR009746">
    <property type="entry name" value="LipidA_acyl_PagP"/>
</dbReference>
<dbReference type="InterPro" id="IPR011250">
    <property type="entry name" value="OMP/PagP_b-brl"/>
</dbReference>
<dbReference type="NCBIfam" id="NF008271">
    <property type="entry name" value="PRK11045.1"/>
    <property type="match status" value="1"/>
</dbReference>
<dbReference type="Pfam" id="PF07017">
    <property type="entry name" value="PagP"/>
    <property type="match status" value="1"/>
</dbReference>
<dbReference type="SUPFAM" id="SSF56925">
    <property type="entry name" value="OMPA-like"/>
    <property type="match status" value="1"/>
</dbReference>
<accession>E0T5K2</accession>
<protein>
    <recommendedName>
        <fullName evidence="1">Lipid A acyltransferase PagP</fullName>
        <ecNumber evidence="1">2.3.1.251</ecNumber>
    </recommendedName>
    <alternativeName>
        <fullName evidence="1">Lipid A acylation protein</fullName>
    </alternativeName>
</protein>
<comment type="function">
    <text evidence="1">Transfers a fatty acid residue from the sn-1 position of a phospholipid to the N-linked hydroxyfatty acid chain on the proximal unit of lipid A or its precursors.</text>
</comment>
<comment type="catalytic activity">
    <reaction evidence="1">
        <text>a lipid A + a 1,2-diacyl-sn-glycero-3-phosphocholine = a hepta-acyl lipid A + a 2-acyl-sn-glycero-3-phosphocholine</text>
        <dbReference type="Rhea" id="RHEA:74275"/>
        <dbReference type="ChEBI" id="CHEBI:57643"/>
        <dbReference type="ChEBI" id="CHEBI:57875"/>
        <dbReference type="ChEBI" id="CHEBI:193141"/>
        <dbReference type="ChEBI" id="CHEBI:193142"/>
        <dbReference type="EC" id="2.3.1.251"/>
    </reaction>
</comment>
<comment type="catalytic activity">
    <reaction evidence="1">
        <text>a lipid IVA + a 1,2-diacyl-sn-glycero-3-phosphocholine = a lipid IVB + a 2-acyl-sn-glycero-3-phosphocholine</text>
        <dbReference type="Rhea" id="RHEA:74279"/>
        <dbReference type="ChEBI" id="CHEBI:57643"/>
        <dbReference type="ChEBI" id="CHEBI:57875"/>
        <dbReference type="ChEBI" id="CHEBI:176425"/>
        <dbReference type="ChEBI" id="CHEBI:193143"/>
        <dbReference type="EC" id="2.3.1.251"/>
    </reaction>
</comment>
<comment type="catalytic activity">
    <reaction evidence="1">
        <text>a lipid IIA + a 1,2-diacyl-sn-glycero-3-phosphocholine = a lipid IIB + a 2-acyl-sn-glycero-3-phosphocholine</text>
        <dbReference type="Rhea" id="RHEA:74283"/>
        <dbReference type="ChEBI" id="CHEBI:57643"/>
        <dbReference type="ChEBI" id="CHEBI:57875"/>
        <dbReference type="ChEBI" id="CHEBI:193144"/>
        <dbReference type="ChEBI" id="CHEBI:193145"/>
        <dbReference type="EC" id="2.3.1.251"/>
    </reaction>
</comment>
<comment type="subunit">
    <text evidence="1">Homodimer.</text>
</comment>
<comment type="subcellular location">
    <subcellularLocation>
        <location evidence="1">Cell outer membrane</location>
    </subcellularLocation>
</comment>
<comment type="similarity">
    <text evidence="1">Belongs to the lipid A palmitoyltransferase family.</text>
</comment>
<gene>
    <name evidence="1" type="primary">pagP</name>
    <name type="ordered locus">ETAF_2422</name>
</gene>